<organism>
    <name type="scientific">Neisseria meningitidis serogroup A / serotype 4A (strain DSM 15465 / Z2491)</name>
    <dbReference type="NCBI Taxonomy" id="122587"/>
    <lineage>
        <taxon>Bacteria</taxon>
        <taxon>Pseudomonadati</taxon>
        <taxon>Pseudomonadota</taxon>
        <taxon>Betaproteobacteria</taxon>
        <taxon>Neisseriales</taxon>
        <taxon>Neisseriaceae</taxon>
        <taxon>Neisseria</taxon>
    </lineage>
</organism>
<proteinExistence type="inferred from homology"/>
<evidence type="ECO:0000255" key="1">
    <source>
        <dbReference type="HAMAP-Rule" id="MF_00054"/>
    </source>
</evidence>
<name>EFG_NEIMA</name>
<dbReference type="EMBL" id="AL157959">
    <property type="protein sequence ID" value="CAM07453.1"/>
    <property type="molecule type" value="Genomic_DNA"/>
</dbReference>
<dbReference type="PIR" id="E82006">
    <property type="entry name" value="E82006"/>
</dbReference>
<dbReference type="RefSeq" id="WP_002215392.1">
    <property type="nucleotide sequence ID" value="NC_003116.1"/>
</dbReference>
<dbReference type="SMR" id="Q9JX07"/>
<dbReference type="EnsemblBacteria" id="CAM07453">
    <property type="protein sequence ID" value="CAM07453"/>
    <property type="gene ID" value="NMA0135"/>
</dbReference>
<dbReference type="GeneID" id="93387212"/>
<dbReference type="KEGG" id="nma:NMA0135"/>
<dbReference type="HOGENOM" id="CLU_002794_4_1_4"/>
<dbReference type="Proteomes" id="UP000000626">
    <property type="component" value="Chromosome"/>
</dbReference>
<dbReference type="GO" id="GO:0005737">
    <property type="term" value="C:cytoplasm"/>
    <property type="evidence" value="ECO:0007669"/>
    <property type="project" value="UniProtKB-SubCell"/>
</dbReference>
<dbReference type="GO" id="GO:0005525">
    <property type="term" value="F:GTP binding"/>
    <property type="evidence" value="ECO:0007669"/>
    <property type="project" value="UniProtKB-UniRule"/>
</dbReference>
<dbReference type="GO" id="GO:0003924">
    <property type="term" value="F:GTPase activity"/>
    <property type="evidence" value="ECO:0007669"/>
    <property type="project" value="InterPro"/>
</dbReference>
<dbReference type="GO" id="GO:0097216">
    <property type="term" value="F:guanosine tetraphosphate binding"/>
    <property type="evidence" value="ECO:0007669"/>
    <property type="project" value="UniProtKB-ARBA"/>
</dbReference>
<dbReference type="GO" id="GO:0003746">
    <property type="term" value="F:translation elongation factor activity"/>
    <property type="evidence" value="ECO:0007669"/>
    <property type="project" value="UniProtKB-UniRule"/>
</dbReference>
<dbReference type="GO" id="GO:0032790">
    <property type="term" value="P:ribosome disassembly"/>
    <property type="evidence" value="ECO:0007669"/>
    <property type="project" value="TreeGrafter"/>
</dbReference>
<dbReference type="CDD" id="cd01886">
    <property type="entry name" value="EF-G"/>
    <property type="match status" value="1"/>
</dbReference>
<dbReference type="CDD" id="cd16262">
    <property type="entry name" value="EFG_III"/>
    <property type="match status" value="1"/>
</dbReference>
<dbReference type="CDD" id="cd01434">
    <property type="entry name" value="EFG_mtEFG1_IV"/>
    <property type="match status" value="1"/>
</dbReference>
<dbReference type="CDD" id="cd03713">
    <property type="entry name" value="EFG_mtEFG_C"/>
    <property type="match status" value="1"/>
</dbReference>
<dbReference type="CDD" id="cd04088">
    <property type="entry name" value="EFG_mtEFG_II"/>
    <property type="match status" value="1"/>
</dbReference>
<dbReference type="FunFam" id="2.40.30.10:FF:000006">
    <property type="entry name" value="Elongation factor G"/>
    <property type="match status" value="1"/>
</dbReference>
<dbReference type="FunFam" id="3.30.230.10:FF:000003">
    <property type="entry name" value="Elongation factor G"/>
    <property type="match status" value="1"/>
</dbReference>
<dbReference type="FunFam" id="3.30.70.240:FF:000001">
    <property type="entry name" value="Elongation factor G"/>
    <property type="match status" value="1"/>
</dbReference>
<dbReference type="FunFam" id="3.30.70.870:FF:000001">
    <property type="entry name" value="Elongation factor G"/>
    <property type="match status" value="1"/>
</dbReference>
<dbReference type="FunFam" id="3.40.50.300:FF:000029">
    <property type="entry name" value="Elongation factor G"/>
    <property type="match status" value="1"/>
</dbReference>
<dbReference type="Gene3D" id="3.30.230.10">
    <property type="match status" value="1"/>
</dbReference>
<dbReference type="Gene3D" id="3.30.70.240">
    <property type="match status" value="1"/>
</dbReference>
<dbReference type="Gene3D" id="3.30.70.870">
    <property type="entry name" value="Elongation Factor G (Translational Gtpase), domain 3"/>
    <property type="match status" value="1"/>
</dbReference>
<dbReference type="Gene3D" id="3.40.50.300">
    <property type="entry name" value="P-loop containing nucleotide triphosphate hydrolases"/>
    <property type="match status" value="1"/>
</dbReference>
<dbReference type="Gene3D" id="2.40.30.10">
    <property type="entry name" value="Translation factors"/>
    <property type="match status" value="1"/>
</dbReference>
<dbReference type="HAMAP" id="MF_00054_B">
    <property type="entry name" value="EF_G_EF_2_B"/>
    <property type="match status" value="1"/>
</dbReference>
<dbReference type="InterPro" id="IPR041095">
    <property type="entry name" value="EFG_II"/>
</dbReference>
<dbReference type="InterPro" id="IPR009022">
    <property type="entry name" value="EFG_III"/>
</dbReference>
<dbReference type="InterPro" id="IPR035647">
    <property type="entry name" value="EFG_III/V"/>
</dbReference>
<dbReference type="InterPro" id="IPR047872">
    <property type="entry name" value="EFG_IV"/>
</dbReference>
<dbReference type="InterPro" id="IPR035649">
    <property type="entry name" value="EFG_V"/>
</dbReference>
<dbReference type="InterPro" id="IPR000640">
    <property type="entry name" value="EFG_V-like"/>
</dbReference>
<dbReference type="InterPro" id="IPR004161">
    <property type="entry name" value="EFTu-like_2"/>
</dbReference>
<dbReference type="InterPro" id="IPR031157">
    <property type="entry name" value="G_TR_CS"/>
</dbReference>
<dbReference type="InterPro" id="IPR027417">
    <property type="entry name" value="P-loop_NTPase"/>
</dbReference>
<dbReference type="InterPro" id="IPR020568">
    <property type="entry name" value="Ribosomal_Su5_D2-typ_SF"/>
</dbReference>
<dbReference type="InterPro" id="IPR014721">
    <property type="entry name" value="Ribsml_uS5_D2-typ_fold_subgr"/>
</dbReference>
<dbReference type="InterPro" id="IPR005225">
    <property type="entry name" value="Small_GTP-bd"/>
</dbReference>
<dbReference type="InterPro" id="IPR000795">
    <property type="entry name" value="T_Tr_GTP-bd_dom"/>
</dbReference>
<dbReference type="InterPro" id="IPR009000">
    <property type="entry name" value="Transl_B-barrel_sf"/>
</dbReference>
<dbReference type="InterPro" id="IPR004540">
    <property type="entry name" value="Transl_elong_EFG/EF2"/>
</dbReference>
<dbReference type="InterPro" id="IPR005517">
    <property type="entry name" value="Transl_elong_EFG/EF2_IV"/>
</dbReference>
<dbReference type="NCBIfam" id="TIGR00484">
    <property type="entry name" value="EF-G"/>
    <property type="match status" value="1"/>
</dbReference>
<dbReference type="NCBIfam" id="NF009381">
    <property type="entry name" value="PRK12740.1-5"/>
    <property type="match status" value="1"/>
</dbReference>
<dbReference type="NCBIfam" id="TIGR00231">
    <property type="entry name" value="small_GTP"/>
    <property type="match status" value="1"/>
</dbReference>
<dbReference type="PANTHER" id="PTHR43261:SF1">
    <property type="entry name" value="RIBOSOME-RELEASING FACTOR 2, MITOCHONDRIAL"/>
    <property type="match status" value="1"/>
</dbReference>
<dbReference type="PANTHER" id="PTHR43261">
    <property type="entry name" value="TRANSLATION ELONGATION FACTOR G-RELATED"/>
    <property type="match status" value="1"/>
</dbReference>
<dbReference type="Pfam" id="PF00679">
    <property type="entry name" value="EFG_C"/>
    <property type="match status" value="1"/>
</dbReference>
<dbReference type="Pfam" id="PF14492">
    <property type="entry name" value="EFG_III"/>
    <property type="match status" value="1"/>
</dbReference>
<dbReference type="Pfam" id="PF03764">
    <property type="entry name" value="EFG_IV"/>
    <property type="match status" value="1"/>
</dbReference>
<dbReference type="Pfam" id="PF00009">
    <property type="entry name" value="GTP_EFTU"/>
    <property type="match status" value="1"/>
</dbReference>
<dbReference type="Pfam" id="PF03144">
    <property type="entry name" value="GTP_EFTU_D2"/>
    <property type="match status" value="1"/>
</dbReference>
<dbReference type="PRINTS" id="PR00315">
    <property type="entry name" value="ELONGATNFCT"/>
</dbReference>
<dbReference type="SMART" id="SM00838">
    <property type="entry name" value="EFG_C"/>
    <property type="match status" value="1"/>
</dbReference>
<dbReference type="SMART" id="SM00889">
    <property type="entry name" value="EFG_IV"/>
    <property type="match status" value="1"/>
</dbReference>
<dbReference type="SUPFAM" id="SSF54980">
    <property type="entry name" value="EF-G C-terminal domain-like"/>
    <property type="match status" value="2"/>
</dbReference>
<dbReference type="SUPFAM" id="SSF52540">
    <property type="entry name" value="P-loop containing nucleoside triphosphate hydrolases"/>
    <property type="match status" value="1"/>
</dbReference>
<dbReference type="SUPFAM" id="SSF54211">
    <property type="entry name" value="Ribosomal protein S5 domain 2-like"/>
    <property type="match status" value="1"/>
</dbReference>
<dbReference type="SUPFAM" id="SSF50447">
    <property type="entry name" value="Translation proteins"/>
    <property type="match status" value="1"/>
</dbReference>
<dbReference type="PROSITE" id="PS00301">
    <property type="entry name" value="G_TR_1"/>
    <property type="match status" value="1"/>
</dbReference>
<dbReference type="PROSITE" id="PS51722">
    <property type="entry name" value="G_TR_2"/>
    <property type="match status" value="1"/>
</dbReference>
<reference key="1">
    <citation type="journal article" date="2000" name="Nature">
        <title>Complete DNA sequence of a serogroup A strain of Neisseria meningitidis Z2491.</title>
        <authorList>
            <person name="Parkhill J."/>
            <person name="Achtman M."/>
            <person name="James K.D."/>
            <person name="Bentley S.D."/>
            <person name="Churcher C.M."/>
            <person name="Klee S.R."/>
            <person name="Morelli G."/>
            <person name="Basham D."/>
            <person name="Brown D."/>
            <person name="Chillingworth T."/>
            <person name="Davies R.M."/>
            <person name="Davis P."/>
            <person name="Devlin K."/>
            <person name="Feltwell T."/>
            <person name="Hamlin N."/>
            <person name="Holroyd S."/>
            <person name="Jagels K."/>
            <person name="Leather S."/>
            <person name="Moule S."/>
            <person name="Mungall K.L."/>
            <person name="Quail M.A."/>
            <person name="Rajandream M.A."/>
            <person name="Rutherford K.M."/>
            <person name="Simmonds M."/>
            <person name="Skelton J."/>
            <person name="Whitehead S."/>
            <person name="Spratt B.G."/>
            <person name="Barrell B.G."/>
        </authorList>
    </citation>
    <scope>NUCLEOTIDE SEQUENCE [LARGE SCALE GENOMIC DNA]</scope>
    <source>
        <strain>DSM 15465 / Z2491</strain>
    </source>
</reference>
<accession>Q9JX07</accession>
<accession>A1INZ6</accession>
<keyword id="KW-0963">Cytoplasm</keyword>
<keyword id="KW-0251">Elongation factor</keyword>
<keyword id="KW-0342">GTP-binding</keyword>
<keyword id="KW-0547">Nucleotide-binding</keyword>
<keyword id="KW-0648">Protein biosynthesis</keyword>
<feature type="chain" id="PRO_0000091167" description="Elongation factor G">
    <location>
        <begin position="1"/>
        <end position="701"/>
    </location>
</feature>
<feature type="domain" description="tr-type G">
    <location>
        <begin position="8"/>
        <end position="290"/>
    </location>
</feature>
<feature type="binding site" evidence="1">
    <location>
        <begin position="17"/>
        <end position="24"/>
    </location>
    <ligand>
        <name>GTP</name>
        <dbReference type="ChEBI" id="CHEBI:37565"/>
    </ligand>
</feature>
<feature type="binding site" evidence="1">
    <location>
        <begin position="88"/>
        <end position="92"/>
    </location>
    <ligand>
        <name>GTP</name>
        <dbReference type="ChEBI" id="CHEBI:37565"/>
    </ligand>
</feature>
<feature type="binding site" evidence="1">
    <location>
        <begin position="142"/>
        <end position="145"/>
    </location>
    <ligand>
        <name>GTP</name>
        <dbReference type="ChEBI" id="CHEBI:37565"/>
    </ligand>
</feature>
<comment type="function">
    <text evidence="1">Catalyzes the GTP-dependent ribosomal translocation step during translation elongation. During this step, the ribosome changes from the pre-translocational (PRE) to the post-translocational (POST) state as the newly formed A-site-bound peptidyl-tRNA and P-site-bound deacylated tRNA move to the P and E sites, respectively. Catalyzes the coordinated movement of the two tRNA molecules, the mRNA and conformational changes in the ribosome.</text>
</comment>
<comment type="subcellular location">
    <subcellularLocation>
        <location evidence="1">Cytoplasm</location>
    </subcellularLocation>
</comment>
<comment type="similarity">
    <text evidence="1">Belongs to the TRAFAC class translation factor GTPase superfamily. Classic translation factor GTPase family. EF-G/EF-2 subfamily.</text>
</comment>
<protein>
    <recommendedName>
        <fullName evidence="1">Elongation factor G</fullName>
        <shortName evidence="1">EF-G</shortName>
    </recommendedName>
</protein>
<sequence>MARKTPISLYRNIGISAHIDAGKTTTTERILFYTGLTHKLGEVHDGAATTDYMEQEQERGITITSAAVTSYWSGMAKQFPEHRFNIIDTPGHVDFTVEVERSMRVLDGAVMVYCAVGGVQPQSETVWRQANKYQVPRLAFVNKMDRQGANFFRVVEQMKTRLRANPVPIVIPVGAEDNFSGVVDLLKMKSIIWNEADKGTTFTYGDIPAELVETAEEWRQNMIEAAAEASEELMDKYLGGDELTEEEIVGALRQRTLAGEIQPMLCGSAFKNKGVQRMLDAVVELLPAPTDIPPVQGVNPNTEEADSRQASDEEKFSALAFKMLNDKYVGQLTFIRVYSGVVKSGDTVLNSVKGTRERIGRLVQMTAADRTEIEEVRAGDIAAAIGLKDVTTGETLCAESAPIILERMEFPEPVIHIAVEPKTKADQEKMGIALNRLAKEDPSFRVRTDEESGQTIISGMGELHLEIIVDRMKREFGVEANIGAPQVAYRETIRKAVKAEYKHAKQSGGKGQYGHVVIEMEPMEPGGEGYEFIDEIKGGVIPREFIPSVDKGIRDTLPNGIVAGYPVVDVRIRLVFGSYHDVDSSQLAFELAASQAFKEGMRQASPALLEPIMAVEVETPEEYMGDVMGDLNRRRGVVLGMDDDGIGGKKVRAEVPLAEMFGYSTDLRSATQGRATYSMEFKKYSEAPAHIAAAVTEARKG</sequence>
<gene>
    <name evidence="1" type="primary">fusA</name>
    <name type="ordered locus">NMA0135</name>
</gene>